<protein>
    <recommendedName>
        <fullName>Proline-specific permease ProY</fullName>
    </recommendedName>
</protein>
<reference key="1">
    <citation type="journal article" date="1997" name="Microbiology">
        <title>A cryptic proline permease in Salmonella typhimurium.</title>
        <authorList>
            <person name="Liao M.K."/>
            <person name="Gort S."/>
            <person name="Maloy S."/>
        </authorList>
    </citation>
    <scope>NUCLEOTIDE SEQUENCE [GENOMIC DNA]</scope>
    <source>
        <strain>LT2</strain>
    </source>
</reference>
<reference key="2">
    <citation type="journal article" date="2001" name="Nature">
        <title>Complete genome sequence of Salmonella enterica serovar Typhimurium LT2.</title>
        <authorList>
            <person name="McClelland M."/>
            <person name="Sanderson K.E."/>
            <person name="Spieth J."/>
            <person name="Clifton S.W."/>
            <person name="Latreille P."/>
            <person name="Courtney L."/>
            <person name="Porwollik S."/>
            <person name="Ali J."/>
            <person name="Dante M."/>
            <person name="Du F."/>
            <person name="Hou S."/>
            <person name="Layman D."/>
            <person name="Leonard S."/>
            <person name="Nguyen C."/>
            <person name="Scott K."/>
            <person name="Holmes A."/>
            <person name="Grewal N."/>
            <person name="Mulvaney E."/>
            <person name="Ryan E."/>
            <person name="Sun H."/>
            <person name="Florea L."/>
            <person name="Miller W."/>
            <person name="Stoneking T."/>
            <person name="Nhan M."/>
            <person name="Waterston R."/>
            <person name="Wilson R.K."/>
        </authorList>
    </citation>
    <scope>NUCLEOTIDE SEQUENCE [LARGE SCALE GENOMIC DNA]</scope>
    <source>
        <strain>LT2 / SGSC1412 / ATCC 700720</strain>
    </source>
</reference>
<name>PROY_SALTY</name>
<organism>
    <name type="scientific">Salmonella typhimurium (strain LT2 / SGSC1412 / ATCC 700720)</name>
    <dbReference type="NCBI Taxonomy" id="99287"/>
    <lineage>
        <taxon>Bacteria</taxon>
        <taxon>Pseudomonadati</taxon>
        <taxon>Pseudomonadota</taxon>
        <taxon>Gammaproteobacteria</taxon>
        <taxon>Enterobacterales</taxon>
        <taxon>Enterobacteriaceae</taxon>
        <taxon>Salmonella</taxon>
    </lineage>
</organism>
<comment type="function">
    <text>Permease that is involved in the transport across the cytoplasmic membrane of proline.</text>
</comment>
<comment type="subcellular location">
    <subcellularLocation>
        <location>Cell inner membrane</location>
        <topology>Multi-pass membrane protein</topology>
    </subcellularLocation>
</comment>
<comment type="similarity">
    <text evidence="2">Belongs to the amino acid-polyamine-organocation (APC) superfamily. Amino acid transporter (AAT) (TC 2.A.3.1) family.</text>
</comment>
<sequence length="456" mass="50048">MESNNKLKRGLSTRHIRFMALGSAIGTGLFYGSADAIKMAGPSVLLAYIIGGVAAYIIMRALGEMSVHNPAASSFSRYAQENLGPLAGYITGWTYCFEILIVAIADVTAFGIYMGVWFPAVPHWIWVLSVVLIICAINLMSVKVFGELEFWFSFFKVATIIIMIVAGIGIIVWGIGNGGQPTGIHNLWSNGGFFSNGWLGMIMSLQMVMFAYGGIEIIGITAGEAKDPEKSIPRAINSVPMRILVFYVGTLFVIMSIYPWNQVGTNGSPFVLTFQHMGITFAASILNFVVLTASLSAINSDVFGVGRMLHGMAEQGSAPKVFAKTSRRGIPWVTVLVMTIALLFAVYLNYIMPENVFLVIASLATFATVWVWIMILLSQIAFRRRLPPEEVKALKFKVPGGVVTTIAGLIFLVFIIALIGYHPDTRISLYVGFAWIVLLLIGWIFKRRRDRQLAQA</sequence>
<dbReference type="EMBL" id="X74420">
    <property type="protein sequence ID" value="CAA52441.1"/>
    <property type="molecule type" value="Genomic_DNA"/>
</dbReference>
<dbReference type="EMBL" id="AE006468">
    <property type="protein sequence ID" value="AAL19354.1"/>
    <property type="molecule type" value="Genomic_DNA"/>
</dbReference>
<dbReference type="PIR" id="S35983">
    <property type="entry name" value="S35983"/>
</dbReference>
<dbReference type="RefSeq" id="NP_459395.1">
    <property type="nucleotide sequence ID" value="NC_003197.2"/>
</dbReference>
<dbReference type="RefSeq" id="WP_001555879.1">
    <property type="nucleotide sequence ID" value="NC_003197.2"/>
</dbReference>
<dbReference type="SMR" id="P37460"/>
<dbReference type="STRING" id="99287.STM0400"/>
<dbReference type="TCDB" id="2.A.3.1.6">
    <property type="family name" value="the amino acid-polyamine-organocation (apc) family"/>
</dbReference>
<dbReference type="PaxDb" id="99287-STM0400"/>
<dbReference type="GeneID" id="1251919"/>
<dbReference type="KEGG" id="stm:STM0400"/>
<dbReference type="PATRIC" id="fig|99287.12.peg.427"/>
<dbReference type="HOGENOM" id="CLU_007946_9_3_6"/>
<dbReference type="OMA" id="PHWVWVL"/>
<dbReference type="PhylomeDB" id="P37460"/>
<dbReference type="BioCyc" id="SENT99287:STM0400-MONOMER"/>
<dbReference type="Proteomes" id="UP000001014">
    <property type="component" value="Chromosome"/>
</dbReference>
<dbReference type="GO" id="GO:0016020">
    <property type="term" value="C:membrane"/>
    <property type="evidence" value="ECO:0000318"/>
    <property type="project" value="GO_Central"/>
</dbReference>
<dbReference type="GO" id="GO:0005886">
    <property type="term" value="C:plasma membrane"/>
    <property type="evidence" value="ECO:0007669"/>
    <property type="project" value="UniProtKB-SubCell"/>
</dbReference>
<dbReference type="GO" id="GO:0015171">
    <property type="term" value="F:amino acid transmembrane transporter activity"/>
    <property type="evidence" value="ECO:0000318"/>
    <property type="project" value="GO_Central"/>
</dbReference>
<dbReference type="GO" id="GO:0003333">
    <property type="term" value="P:amino acid transmembrane transport"/>
    <property type="evidence" value="ECO:0000318"/>
    <property type="project" value="GO_Central"/>
</dbReference>
<dbReference type="FunFam" id="1.20.1740.10:FF:000001">
    <property type="entry name" value="Amino acid permease"/>
    <property type="match status" value="1"/>
</dbReference>
<dbReference type="Gene3D" id="1.20.1740.10">
    <property type="entry name" value="Amino acid/polyamine transporter I"/>
    <property type="match status" value="1"/>
</dbReference>
<dbReference type="InterPro" id="IPR004841">
    <property type="entry name" value="AA-permease/SLC12A_dom"/>
</dbReference>
<dbReference type="InterPro" id="IPR004840">
    <property type="entry name" value="Amino_acid_permease_CS"/>
</dbReference>
<dbReference type="NCBIfam" id="NF007876">
    <property type="entry name" value="PRK10580.1"/>
    <property type="match status" value="1"/>
</dbReference>
<dbReference type="PANTHER" id="PTHR43495">
    <property type="entry name" value="GABA PERMEASE"/>
    <property type="match status" value="1"/>
</dbReference>
<dbReference type="PANTHER" id="PTHR43495:SF6">
    <property type="entry name" value="THREONINE_SERINE TRANSPORTER YBXG-RELATED"/>
    <property type="match status" value="1"/>
</dbReference>
<dbReference type="Pfam" id="PF00324">
    <property type="entry name" value="AA_permease"/>
    <property type="match status" value="1"/>
</dbReference>
<dbReference type="PIRSF" id="PIRSF006060">
    <property type="entry name" value="AA_transporter"/>
    <property type="match status" value="1"/>
</dbReference>
<dbReference type="PROSITE" id="PS00218">
    <property type="entry name" value="AMINO_ACID_PERMEASE_1"/>
    <property type="match status" value="1"/>
</dbReference>
<evidence type="ECO:0000255" key="1"/>
<evidence type="ECO:0000305" key="2"/>
<gene>
    <name type="primary">proY</name>
    <name type="ordered locus">STM0400</name>
</gene>
<accession>P37460</accession>
<proteinExistence type="inferred from homology"/>
<feature type="chain" id="PRO_0000054210" description="Proline-specific permease ProY">
    <location>
        <begin position="1"/>
        <end position="456"/>
    </location>
</feature>
<feature type="topological domain" description="Cytoplasmic" evidence="1">
    <location>
        <begin position="1"/>
        <end position="17"/>
    </location>
</feature>
<feature type="transmembrane region" description="Helical" evidence="1">
    <location>
        <begin position="18"/>
        <end position="38"/>
    </location>
</feature>
<feature type="transmembrane region" description="Helical" evidence="1">
    <location>
        <begin position="39"/>
        <end position="59"/>
    </location>
</feature>
<feature type="topological domain" description="Cytoplasmic" evidence="1">
    <location>
        <begin position="60"/>
        <end position="95"/>
    </location>
</feature>
<feature type="transmembrane region" description="Helical" evidence="1">
    <location>
        <begin position="96"/>
        <end position="116"/>
    </location>
</feature>
<feature type="transmembrane region" description="Helical" evidence="1">
    <location>
        <begin position="117"/>
        <end position="137"/>
    </location>
</feature>
<feature type="topological domain" description="Cytoplasmic" evidence="1">
    <location>
        <begin position="138"/>
        <end position="156"/>
    </location>
</feature>
<feature type="transmembrane region" description="Helical" evidence="1">
    <location>
        <begin position="157"/>
        <end position="177"/>
    </location>
</feature>
<feature type="topological domain" description="Periplasmic" evidence="1">
    <location>
        <begin position="178"/>
        <end position="197"/>
    </location>
</feature>
<feature type="transmembrane region" description="Helical" evidence="1">
    <location>
        <begin position="198"/>
        <end position="218"/>
    </location>
</feature>
<feature type="topological domain" description="Cytoplasmic" evidence="1">
    <location>
        <begin position="219"/>
        <end position="242"/>
    </location>
</feature>
<feature type="transmembrane region" description="Helical" evidence="1">
    <location>
        <begin position="243"/>
        <end position="263"/>
    </location>
</feature>
<feature type="topological domain" description="Periplasmic" evidence="1">
    <location>
        <begin position="264"/>
        <end position="277"/>
    </location>
</feature>
<feature type="transmembrane region" description="Helical" evidence="1">
    <location>
        <begin position="278"/>
        <end position="298"/>
    </location>
</feature>
<feature type="topological domain" description="Cytoplasmic" evidence="1">
    <location>
        <begin position="299"/>
        <end position="331"/>
    </location>
</feature>
<feature type="transmembrane region" description="Helical" evidence="1">
    <location>
        <begin position="332"/>
        <end position="352"/>
    </location>
</feature>
<feature type="topological domain" description="Periplasmic" evidence="1">
    <location>
        <begin position="353"/>
        <end position="355"/>
    </location>
</feature>
<feature type="transmembrane region" description="Helical" evidence="1">
    <location>
        <begin position="356"/>
        <end position="376"/>
    </location>
</feature>
<feature type="topological domain" description="Cytoplasmic" evidence="1">
    <location>
        <begin position="377"/>
        <end position="399"/>
    </location>
</feature>
<feature type="transmembrane region" description="Helical" evidence="1">
    <location>
        <begin position="400"/>
        <end position="420"/>
    </location>
</feature>
<feature type="topological domain" description="Periplasmic" evidence="1">
    <location>
        <begin position="421"/>
        <end position="424"/>
    </location>
</feature>
<feature type="transmembrane region" description="Helical" evidence="1">
    <location>
        <begin position="425"/>
        <end position="445"/>
    </location>
</feature>
<feature type="topological domain" description="Cytoplasmic" evidence="1">
    <location>
        <begin position="446"/>
        <end position="456"/>
    </location>
</feature>
<keyword id="KW-0029">Amino-acid transport</keyword>
<keyword id="KW-0997">Cell inner membrane</keyword>
<keyword id="KW-1003">Cell membrane</keyword>
<keyword id="KW-0472">Membrane</keyword>
<keyword id="KW-1185">Reference proteome</keyword>
<keyword id="KW-0812">Transmembrane</keyword>
<keyword id="KW-1133">Transmembrane helix</keyword>
<keyword id="KW-0813">Transport</keyword>